<keyword id="KW-0090">Biological rhythms</keyword>
<keyword id="KW-1015">Disulfide bond</keyword>
<keyword id="KW-0325">Glycoprotein</keyword>
<keyword id="KW-0336">GPI-anchor</keyword>
<keyword id="KW-0449">Lipoprotein</keyword>
<keyword id="KW-0472">Membrane</keyword>
<keyword id="KW-1185">Reference proteome</keyword>
<keyword id="KW-0732">Signal</keyword>
<keyword id="KW-0812">Transmembrane</keyword>
<keyword id="KW-1133">Transmembrane helix</keyword>
<name>CROK_DROME</name>
<reference evidence="12" key="1">
    <citation type="journal article" date="2000" name="Science">
        <title>The genome sequence of Drosophila melanogaster.</title>
        <authorList>
            <person name="Adams M.D."/>
            <person name="Celniker S.E."/>
            <person name="Holt R.A."/>
            <person name="Evans C.A."/>
            <person name="Gocayne J.D."/>
            <person name="Amanatides P.G."/>
            <person name="Scherer S.E."/>
            <person name="Li P.W."/>
            <person name="Hoskins R.A."/>
            <person name="Galle R.F."/>
            <person name="George R.A."/>
            <person name="Lewis S.E."/>
            <person name="Richards S."/>
            <person name="Ashburner M."/>
            <person name="Henderson S.N."/>
            <person name="Sutton G.G."/>
            <person name="Wortman J.R."/>
            <person name="Yandell M.D."/>
            <person name="Zhang Q."/>
            <person name="Chen L.X."/>
            <person name="Brandon R.C."/>
            <person name="Rogers Y.-H.C."/>
            <person name="Blazej R.G."/>
            <person name="Champe M."/>
            <person name="Pfeiffer B.D."/>
            <person name="Wan K.H."/>
            <person name="Doyle C."/>
            <person name="Baxter E.G."/>
            <person name="Helt G."/>
            <person name="Nelson C.R."/>
            <person name="Miklos G.L.G."/>
            <person name="Abril J.F."/>
            <person name="Agbayani A."/>
            <person name="An H.-J."/>
            <person name="Andrews-Pfannkoch C."/>
            <person name="Baldwin D."/>
            <person name="Ballew R.M."/>
            <person name="Basu A."/>
            <person name="Baxendale J."/>
            <person name="Bayraktaroglu L."/>
            <person name="Beasley E.M."/>
            <person name="Beeson K.Y."/>
            <person name="Benos P.V."/>
            <person name="Berman B.P."/>
            <person name="Bhandari D."/>
            <person name="Bolshakov S."/>
            <person name="Borkova D."/>
            <person name="Botchan M.R."/>
            <person name="Bouck J."/>
            <person name="Brokstein P."/>
            <person name="Brottier P."/>
            <person name="Burtis K.C."/>
            <person name="Busam D.A."/>
            <person name="Butler H."/>
            <person name="Cadieu E."/>
            <person name="Center A."/>
            <person name="Chandra I."/>
            <person name="Cherry J.M."/>
            <person name="Cawley S."/>
            <person name="Dahlke C."/>
            <person name="Davenport L.B."/>
            <person name="Davies P."/>
            <person name="de Pablos B."/>
            <person name="Delcher A."/>
            <person name="Deng Z."/>
            <person name="Mays A.D."/>
            <person name="Dew I."/>
            <person name="Dietz S.M."/>
            <person name="Dodson K."/>
            <person name="Doup L.E."/>
            <person name="Downes M."/>
            <person name="Dugan-Rocha S."/>
            <person name="Dunkov B.C."/>
            <person name="Dunn P."/>
            <person name="Durbin K.J."/>
            <person name="Evangelista C.C."/>
            <person name="Ferraz C."/>
            <person name="Ferriera S."/>
            <person name="Fleischmann W."/>
            <person name="Fosler C."/>
            <person name="Gabrielian A.E."/>
            <person name="Garg N.S."/>
            <person name="Gelbart W.M."/>
            <person name="Glasser K."/>
            <person name="Glodek A."/>
            <person name="Gong F."/>
            <person name="Gorrell J.H."/>
            <person name="Gu Z."/>
            <person name="Guan P."/>
            <person name="Harris M."/>
            <person name="Harris N.L."/>
            <person name="Harvey D.A."/>
            <person name="Heiman T.J."/>
            <person name="Hernandez J.R."/>
            <person name="Houck J."/>
            <person name="Hostin D."/>
            <person name="Houston K.A."/>
            <person name="Howland T.J."/>
            <person name="Wei M.-H."/>
            <person name="Ibegwam C."/>
            <person name="Jalali M."/>
            <person name="Kalush F."/>
            <person name="Karpen G.H."/>
            <person name="Ke Z."/>
            <person name="Kennison J.A."/>
            <person name="Ketchum K.A."/>
            <person name="Kimmel B.E."/>
            <person name="Kodira C.D."/>
            <person name="Kraft C.L."/>
            <person name="Kravitz S."/>
            <person name="Kulp D."/>
            <person name="Lai Z."/>
            <person name="Lasko P."/>
            <person name="Lei Y."/>
            <person name="Levitsky A.A."/>
            <person name="Li J.H."/>
            <person name="Li Z."/>
            <person name="Liang Y."/>
            <person name="Lin X."/>
            <person name="Liu X."/>
            <person name="Mattei B."/>
            <person name="McIntosh T.C."/>
            <person name="McLeod M.P."/>
            <person name="McPherson D."/>
            <person name="Merkulov G."/>
            <person name="Milshina N.V."/>
            <person name="Mobarry C."/>
            <person name="Morris J."/>
            <person name="Moshrefi A."/>
            <person name="Mount S.M."/>
            <person name="Moy M."/>
            <person name="Murphy B."/>
            <person name="Murphy L."/>
            <person name="Muzny D.M."/>
            <person name="Nelson D.L."/>
            <person name="Nelson D.R."/>
            <person name="Nelson K.A."/>
            <person name="Nixon K."/>
            <person name="Nusskern D.R."/>
            <person name="Pacleb J.M."/>
            <person name="Palazzolo M."/>
            <person name="Pittman G.S."/>
            <person name="Pan S."/>
            <person name="Pollard J."/>
            <person name="Puri V."/>
            <person name="Reese M.G."/>
            <person name="Reinert K."/>
            <person name="Remington K."/>
            <person name="Saunders R.D.C."/>
            <person name="Scheeler F."/>
            <person name="Shen H."/>
            <person name="Shue B.C."/>
            <person name="Siden-Kiamos I."/>
            <person name="Simpson M."/>
            <person name="Skupski M.P."/>
            <person name="Smith T.J."/>
            <person name="Spier E."/>
            <person name="Spradling A.C."/>
            <person name="Stapleton M."/>
            <person name="Strong R."/>
            <person name="Sun E."/>
            <person name="Svirskas R."/>
            <person name="Tector C."/>
            <person name="Turner R."/>
            <person name="Venter E."/>
            <person name="Wang A.H."/>
            <person name="Wang X."/>
            <person name="Wang Z.-Y."/>
            <person name="Wassarman D.A."/>
            <person name="Weinstock G.M."/>
            <person name="Weissenbach J."/>
            <person name="Williams S.M."/>
            <person name="Woodage T."/>
            <person name="Worley K.C."/>
            <person name="Wu D."/>
            <person name="Yang S."/>
            <person name="Yao Q.A."/>
            <person name="Ye J."/>
            <person name="Yeh R.-F."/>
            <person name="Zaveri J.S."/>
            <person name="Zhan M."/>
            <person name="Zhang G."/>
            <person name="Zhao Q."/>
            <person name="Zheng L."/>
            <person name="Zheng X.H."/>
            <person name="Zhong F.N."/>
            <person name="Zhong W."/>
            <person name="Zhou X."/>
            <person name="Zhu S.C."/>
            <person name="Zhu X."/>
            <person name="Smith H.O."/>
            <person name="Gibbs R.A."/>
            <person name="Myers E.W."/>
            <person name="Rubin G.M."/>
            <person name="Venter J.C."/>
        </authorList>
    </citation>
    <scope>NUCLEOTIDE SEQUENCE [LARGE SCALE GENOMIC DNA]</scope>
    <source>
        <strain evidence="12">Berkeley</strain>
    </source>
</reference>
<reference evidence="12" key="2">
    <citation type="journal article" date="2002" name="Genome Biol.">
        <title>Annotation of the Drosophila melanogaster euchromatic genome: a systematic review.</title>
        <authorList>
            <person name="Misra S."/>
            <person name="Crosby M.A."/>
            <person name="Mungall C.J."/>
            <person name="Matthews B.B."/>
            <person name="Campbell K.S."/>
            <person name="Hradecky P."/>
            <person name="Huang Y."/>
            <person name="Kaminker J.S."/>
            <person name="Millburn G.H."/>
            <person name="Prochnik S.E."/>
            <person name="Smith C.D."/>
            <person name="Tupy J.L."/>
            <person name="Whitfield E.J."/>
            <person name="Bayraktaroglu L."/>
            <person name="Berman B.P."/>
            <person name="Bettencourt B.R."/>
            <person name="Celniker S.E."/>
            <person name="de Grey A.D.N.J."/>
            <person name="Drysdale R.A."/>
            <person name="Harris N.L."/>
            <person name="Richter J."/>
            <person name="Russo S."/>
            <person name="Schroeder A.J."/>
            <person name="Shu S.Q."/>
            <person name="Stapleton M."/>
            <person name="Yamada C."/>
            <person name="Ashburner M."/>
            <person name="Gelbart W.M."/>
            <person name="Rubin G.M."/>
            <person name="Lewis S.E."/>
        </authorList>
    </citation>
    <scope>GENOME REANNOTATION</scope>
    <source>
        <strain evidence="12">Berkeley</strain>
    </source>
</reference>
<reference evidence="8" key="3">
    <citation type="journal article" date="2002" name="Genome Biol.">
        <title>A Drosophila full-length cDNA resource.</title>
        <authorList>
            <person name="Stapleton M."/>
            <person name="Carlson J.W."/>
            <person name="Brokstein P."/>
            <person name="Yu C."/>
            <person name="Champe M."/>
            <person name="George R.A."/>
            <person name="Guarin H."/>
            <person name="Kronmiller B."/>
            <person name="Pacleb J.M."/>
            <person name="Park S."/>
            <person name="Wan K.H."/>
            <person name="Rubin G.M."/>
            <person name="Celniker S.E."/>
        </authorList>
    </citation>
    <scope>NUCLEOTIDE SEQUENCE [LARGE SCALE MRNA] OF 1-80</scope>
    <source>
        <strain evidence="8">Berkeley</strain>
        <tissue evidence="8">Embryo</tissue>
    </source>
</reference>
<reference evidence="9 10" key="4">
    <citation type="submission" date="2016-07" db="EMBL/GenBank/DDBJ databases">
        <authorList>
            <person name="Carlson J."/>
            <person name="Frise E."/>
            <person name="Park S."/>
            <person name="Wan K."/>
            <person name="Yu C."/>
            <person name="Booth B."/>
            <person name="Spirohn K."/>
            <person name="Hao T."/>
            <person name="Hu Y."/>
            <person name="Calderwood M."/>
            <person name="Hill D."/>
            <person name="Mohr S."/>
            <person name="Vidal M."/>
            <person name="Celniker S."/>
            <person name="Perrimon N."/>
        </authorList>
    </citation>
    <scope>NUCLEOTIDE SEQUENCE [LARGE SCALE MRNA]</scope>
</reference>
<reference evidence="6" key="5">
    <citation type="journal article" date="2010" name="Development">
        <title>Crooked, coiled and crimpled are three Ly6-like proteins required for proper localization of septate junction components.</title>
        <authorList>
            <person name="Nilton A."/>
            <person name="Oshima K."/>
            <person name="Zare F."/>
            <person name="Byri S."/>
            <person name="Nannmark U."/>
            <person name="Nyberg K.G."/>
            <person name="Fehon R.G."/>
            <person name="Uv A.E."/>
        </authorList>
    </citation>
    <scope>FUNCTION</scope>
    <scope>SUBCELLULAR LOCATION</scope>
    <scope>DEVELOPMENTAL STAGE</scope>
    <scope>DISRUPTION PHENOTYPE</scope>
</reference>
<gene>
    <name evidence="11" type="primary">crok</name>
    <name evidence="11" type="ORF">CG17218</name>
</gene>
<protein>
    <recommendedName>
        <fullName evidence="6">UPAR/Ly6 domain-containing protein crok</fullName>
    </recommendedName>
    <alternativeName>
        <fullName evidence="5">Protein crooked</fullName>
    </alternativeName>
</protein>
<proteinExistence type="evidence at protein level"/>
<dbReference type="EMBL" id="AE014134">
    <property type="protein sequence ID" value="AAF53178.1"/>
    <property type="molecule type" value="Genomic_DNA"/>
</dbReference>
<dbReference type="EMBL" id="AY071603">
    <property type="protein sequence ID" value="AAL49225.1"/>
    <property type="status" value="ALT_SEQ"/>
    <property type="molecule type" value="mRNA"/>
</dbReference>
<dbReference type="EMBL" id="BT044115">
    <property type="protein sequence ID" value="ACH92180.1"/>
    <property type="molecule type" value="mRNA"/>
</dbReference>
<dbReference type="EMBL" id="KX531517">
    <property type="protein sequence ID" value="ANY27327.1"/>
    <property type="molecule type" value="mRNA"/>
</dbReference>
<dbReference type="RefSeq" id="NP_609557.1">
    <property type="nucleotide sequence ID" value="NM_135713.3"/>
</dbReference>
<dbReference type="FunCoup" id="Q9VKA0">
    <property type="interactions" value="206"/>
</dbReference>
<dbReference type="STRING" id="7227.FBpp0079924"/>
<dbReference type="GlyGen" id="Q9VKA0">
    <property type="glycosylation" value="1 site"/>
</dbReference>
<dbReference type="PaxDb" id="7227-FBpp0079924"/>
<dbReference type="DNASU" id="34646"/>
<dbReference type="EnsemblMetazoa" id="FBtr0080342">
    <property type="protein sequence ID" value="FBpp0079924"/>
    <property type="gene ID" value="FBgn0032421"/>
</dbReference>
<dbReference type="GeneID" id="34646"/>
<dbReference type="KEGG" id="dme:Dmel_CG17218"/>
<dbReference type="UCSC" id="CG17218-RA">
    <property type="organism name" value="d. melanogaster"/>
</dbReference>
<dbReference type="AGR" id="FB:FBgn0032421"/>
<dbReference type="CTD" id="34646"/>
<dbReference type="FlyBase" id="FBgn0032421">
    <property type="gene designation" value="crok"/>
</dbReference>
<dbReference type="VEuPathDB" id="VectorBase:FBgn0032421"/>
<dbReference type="eggNOG" id="ENOG502RZYS">
    <property type="taxonomic scope" value="Eukaryota"/>
</dbReference>
<dbReference type="HOGENOM" id="CLU_126345_0_0_1"/>
<dbReference type="InParanoid" id="Q9VKA0"/>
<dbReference type="OMA" id="GQAIKCW"/>
<dbReference type="OrthoDB" id="6110560at2759"/>
<dbReference type="BioGRID-ORCS" id="34646">
    <property type="hits" value="0 hits in 1 CRISPR screen"/>
</dbReference>
<dbReference type="GenomeRNAi" id="34646"/>
<dbReference type="Proteomes" id="UP000000803">
    <property type="component" value="Chromosome 2L"/>
</dbReference>
<dbReference type="Bgee" id="FBgn0032421">
    <property type="expression patterns" value="Expressed in secondary oocyte and 114 other cell types or tissues"/>
</dbReference>
<dbReference type="ExpressionAtlas" id="Q9VKA0">
    <property type="expression patterns" value="baseline and differential"/>
</dbReference>
<dbReference type="GO" id="GO:0005737">
    <property type="term" value="C:cytoplasm"/>
    <property type="evidence" value="ECO:0000314"/>
    <property type="project" value="FlyBase"/>
</dbReference>
<dbReference type="GO" id="GO:0012505">
    <property type="term" value="C:endomembrane system"/>
    <property type="evidence" value="ECO:0007669"/>
    <property type="project" value="UniProtKB-SubCell"/>
</dbReference>
<dbReference type="GO" id="GO:0098552">
    <property type="term" value="C:side of membrane"/>
    <property type="evidence" value="ECO:0007669"/>
    <property type="project" value="UniProtKB-KW"/>
</dbReference>
<dbReference type="GO" id="GO:0031982">
    <property type="term" value="C:vesicle"/>
    <property type="evidence" value="ECO:0007669"/>
    <property type="project" value="UniProtKB-SubCell"/>
</dbReference>
<dbReference type="GO" id="GO:0032222">
    <property type="term" value="P:regulation of synaptic transmission, cholinergic"/>
    <property type="evidence" value="ECO:0007669"/>
    <property type="project" value="InterPro"/>
</dbReference>
<dbReference type="GO" id="GO:0035151">
    <property type="term" value="P:regulation of tube size, open tracheal system"/>
    <property type="evidence" value="ECO:0000315"/>
    <property type="project" value="FlyBase"/>
</dbReference>
<dbReference type="GO" id="GO:0048511">
    <property type="term" value="P:rhythmic process"/>
    <property type="evidence" value="ECO:0007669"/>
    <property type="project" value="UniProtKB-KW"/>
</dbReference>
<dbReference type="GO" id="GO:0019991">
    <property type="term" value="P:septate junction assembly"/>
    <property type="evidence" value="ECO:0000315"/>
    <property type="project" value="FlyBase"/>
</dbReference>
<dbReference type="GO" id="GO:0030431">
    <property type="term" value="P:sleep"/>
    <property type="evidence" value="ECO:0007669"/>
    <property type="project" value="InterPro"/>
</dbReference>
<dbReference type="CDD" id="cd23592">
    <property type="entry name" value="TFP_LU_ECD_Crok"/>
    <property type="match status" value="1"/>
</dbReference>
<dbReference type="InterPro" id="IPR031424">
    <property type="entry name" value="QVR-like"/>
</dbReference>
<dbReference type="InterPro" id="IPR050975">
    <property type="entry name" value="Sleep_regulator"/>
</dbReference>
<dbReference type="PANTHER" id="PTHR33562">
    <property type="entry name" value="ATILLA, ISOFORM B-RELATED-RELATED"/>
    <property type="match status" value="1"/>
</dbReference>
<dbReference type="PANTHER" id="PTHR33562:SF2">
    <property type="entry name" value="PROTEIN QUIVER"/>
    <property type="match status" value="1"/>
</dbReference>
<dbReference type="Pfam" id="PF17064">
    <property type="entry name" value="QVR"/>
    <property type="match status" value="1"/>
</dbReference>
<comment type="function">
    <text evidence="4">Required for septate junction assembly, possibly by organizing the preassembly and transport of septate junction proteins including dlg1/disks large 1 and Nrx-IV/Neurexin-IV (PubMed:20570942). Involved in paracellular barrier functions of trachea, hindgut and salivary gland mediated by epithelial cell septate junctions (PubMed:20570942).</text>
</comment>
<comment type="subcellular location">
    <subcellularLocation>
        <location evidence="4">Vesicle</location>
    </subcellularLocation>
    <subcellularLocation>
        <location evidence="4">Membrane</location>
        <topology evidence="1">Lipid-anchor</topology>
        <topology evidence="1">GPI-anchor</topology>
    </subcellularLocation>
    <subcellularLocation>
        <location evidence="4">Endomembrane system</location>
    </subcellularLocation>
</comment>
<comment type="developmental stage">
    <text evidence="4">Expressed in tracheal metameres at embryogenesis stage 11 (at protein level) (PubMed:20570942). Expressed in hindgut, epidermis and tracheal system at embryogenesis stage 15 (at protein level) (PubMed:20570942). General ectodermal expression in epidermis, foregut and hindgut from embryogenesis stage 12 to 15 (PubMed:20570942). Expressed in tracheal cells from stage 11; expression ceases in the main dorsal trunks by stage 15 but remains in the visceral branches (PubMed:20570942).</text>
</comment>
<comment type="disruption phenotype">
    <text evidence="4">Embryonic lethal with aberrant tracheal dorsal trunk development resulting in tracheal tube size defects (PubMed:20570942). Compromised epithelial paracellular barrier function in trachea and salivary glands due to reduced and irregular septate junction formation (PubMed:20570942).</text>
</comment>
<comment type="miscellaneous">
    <text evidence="5 6">The name crooked reflects the excessively long and convoluted tracheal dorsal trunk phenotype of mutant larvae (PubMed:20570942). Should not be mistaken for the proteins crooked legs (crol) or crooked neck (crn) (Probable).</text>
</comment>
<comment type="similarity">
    <text evidence="3">Belongs to the quiver family.</text>
</comment>
<comment type="sequence caution" evidence="6">
    <conflict type="erroneous termination">
        <sequence resource="EMBL-CDS" id="AAL49225"/>
    </conflict>
    <text>Truncated C-terminus.</text>
</comment>
<accession>Q9VKA0</accession>
<accession>Q8SYE3</accession>
<sequence>MKTLEKYILFAIVLCCLLQLGQAIKCWDCRSDNDPKCGDPFDNSTLAITDCQQAPELEHLKGVRPTMCRKIRQKVHGEWRYFRSCAYMGEPGIEGDERFCLMRTGSYNIFMEFCTCNSKDGCNSAGIHRLGLMGVLTGTLLSVIVAHLLRQ</sequence>
<feature type="signal peptide" evidence="1">
    <location>
        <begin position="1"/>
        <end position="23"/>
    </location>
</feature>
<feature type="chain" id="PRO_5015100399" description="UPAR/Ly6 domain-containing protein crok" evidence="1">
    <location>
        <begin position="24"/>
        <end position="124"/>
    </location>
</feature>
<feature type="propeptide" id="PRO_0000459699" description="Removed in mature form" evidence="1">
    <location>
        <begin position="125"/>
        <end position="151"/>
    </location>
</feature>
<feature type="topological domain" description="Lumenal" evidence="6">
    <location>
        <begin position="24"/>
        <end position="128"/>
    </location>
</feature>
<feature type="transmembrane region" description="Helical" evidence="1">
    <location>
        <begin position="129"/>
        <end position="149"/>
    </location>
</feature>
<feature type="topological domain" description="Cytoplasmic" evidence="6">
    <location>
        <begin position="150"/>
        <end position="151"/>
    </location>
</feature>
<feature type="lipid moiety-binding region" description="GPI-anchor amidated serine" evidence="1">
    <location>
        <position position="124"/>
    </location>
</feature>
<feature type="glycosylation site" description="N-linked (GlcNAc...) asparagine" evidence="2">
    <location>
        <position position="43"/>
    </location>
</feature>
<feature type="disulfide bond" evidence="7">
    <location>
        <begin position="26"/>
        <end position="68"/>
    </location>
</feature>
<feature type="disulfide bond" evidence="7">
    <location>
        <begin position="29"/>
        <end position="37"/>
    </location>
</feature>
<feature type="disulfide bond" evidence="7">
    <location>
        <begin position="51"/>
        <end position="85"/>
    </location>
</feature>
<feature type="disulfide bond" evidence="7">
    <location>
        <begin position="100"/>
        <end position="114"/>
    </location>
</feature>
<feature type="disulfide bond" evidence="7">
    <location>
        <begin position="116"/>
        <end position="122"/>
    </location>
</feature>
<evidence type="ECO:0000255" key="1"/>
<evidence type="ECO:0000255" key="2">
    <source>
        <dbReference type="PROSITE-ProRule" id="PRU00498"/>
    </source>
</evidence>
<evidence type="ECO:0000255" key="3">
    <source>
        <dbReference type="RuleBase" id="RU369020"/>
    </source>
</evidence>
<evidence type="ECO:0000269" key="4">
    <source>
    </source>
</evidence>
<evidence type="ECO:0000303" key="5">
    <source>
    </source>
</evidence>
<evidence type="ECO:0000305" key="6"/>
<evidence type="ECO:0000305" key="7">
    <source>
    </source>
</evidence>
<evidence type="ECO:0000312" key="8">
    <source>
        <dbReference type="EMBL" id="AAL49225.1"/>
    </source>
</evidence>
<evidence type="ECO:0000312" key="9">
    <source>
        <dbReference type="EMBL" id="ACH92180.1"/>
    </source>
</evidence>
<evidence type="ECO:0000312" key="10">
    <source>
        <dbReference type="EMBL" id="ANY27327.1"/>
    </source>
</evidence>
<evidence type="ECO:0000312" key="11">
    <source>
        <dbReference type="FlyBase" id="FBgn0032421"/>
    </source>
</evidence>
<evidence type="ECO:0000312" key="12">
    <source>
        <dbReference type="Proteomes" id="UP000000803"/>
    </source>
</evidence>
<organism evidence="12">
    <name type="scientific">Drosophila melanogaster</name>
    <name type="common">Fruit fly</name>
    <dbReference type="NCBI Taxonomy" id="7227"/>
    <lineage>
        <taxon>Eukaryota</taxon>
        <taxon>Metazoa</taxon>
        <taxon>Ecdysozoa</taxon>
        <taxon>Arthropoda</taxon>
        <taxon>Hexapoda</taxon>
        <taxon>Insecta</taxon>
        <taxon>Pterygota</taxon>
        <taxon>Neoptera</taxon>
        <taxon>Endopterygota</taxon>
        <taxon>Diptera</taxon>
        <taxon>Brachycera</taxon>
        <taxon>Muscomorpha</taxon>
        <taxon>Ephydroidea</taxon>
        <taxon>Drosophilidae</taxon>
        <taxon>Drosophila</taxon>
        <taxon>Sophophora</taxon>
    </lineage>
</organism>